<keyword id="KW-0963">Cytoplasm</keyword>
<keyword id="KW-0378">Hydrolase</keyword>
<keyword id="KW-0694">RNA-binding</keyword>
<keyword id="KW-0820">tRNA-binding</keyword>
<feature type="chain" id="PRO_1000192950" description="Peptidyl-tRNA hydrolase">
    <location>
        <begin position="1"/>
        <end position="193"/>
    </location>
</feature>
<feature type="active site" description="Proton acceptor" evidence="1">
    <location>
        <position position="22"/>
    </location>
</feature>
<feature type="binding site" evidence="1">
    <location>
        <position position="17"/>
    </location>
    <ligand>
        <name>tRNA</name>
        <dbReference type="ChEBI" id="CHEBI:17843"/>
    </ligand>
</feature>
<feature type="binding site" evidence="1">
    <location>
        <position position="68"/>
    </location>
    <ligand>
        <name>tRNA</name>
        <dbReference type="ChEBI" id="CHEBI:17843"/>
    </ligand>
</feature>
<feature type="binding site" evidence="1">
    <location>
        <position position="70"/>
    </location>
    <ligand>
        <name>tRNA</name>
        <dbReference type="ChEBI" id="CHEBI:17843"/>
    </ligand>
</feature>
<feature type="binding site" evidence="1">
    <location>
        <position position="116"/>
    </location>
    <ligand>
        <name>tRNA</name>
        <dbReference type="ChEBI" id="CHEBI:17843"/>
    </ligand>
</feature>
<feature type="site" description="Discriminates between blocked and unblocked aminoacyl-tRNA" evidence="1">
    <location>
        <position position="12"/>
    </location>
</feature>
<feature type="site" description="Stabilizes the basic form of H active site to accept a proton" evidence="1">
    <location>
        <position position="95"/>
    </location>
</feature>
<gene>
    <name evidence="1" type="primary">pth</name>
    <name type="ordered locus">AB57_0880</name>
</gene>
<reference key="1">
    <citation type="journal article" date="2008" name="J. Bacteriol.">
        <title>Comparative genome sequence analysis of multidrug-resistant Acinetobacter baumannii.</title>
        <authorList>
            <person name="Adams M.D."/>
            <person name="Goglin K."/>
            <person name="Molyneaux N."/>
            <person name="Hujer K.M."/>
            <person name="Lavender H."/>
            <person name="Jamison J.J."/>
            <person name="MacDonald I.J."/>
            <person name="Martin K.M."/>
            <person name="Russo T."/>
            <person name="Campagnari A.A."/>
            <person name="Hujer A.M."/>
            <person name="Bonomo R.A."/>
            <person name="Gill S.R."/>
        </authorList>
    </citation>
    <scope>NUCLEOTIDE SEQUENCE [LARGE SCALE GENOMIC DNA]</scope>
    <source>
        <strain>AB0057</strain>
    </source>
</reference>
<name>PTH_ACIB5</name>
<evidence type="ECO:0000255" key="1">
    <source>
        <dbReference type="HAMAP-Rule" id="MF_00083"/>
    </source>
</evidence>
<comment type="function">
    <text evidence="1">Hydrolyzes ribosome-free peptidyl-tRNAs (with 1 or more amino acids incorporated), which drop off the ribosome during protein synthesis, or as a result of ribosome stalling.</text>
</comment>
<comment type="function">
    <text evidence="1">Catalyzes the release of premature peptidyl moieties from peptidyl-tRNA molecules trapped in stalled 50S ribosomal subunits, and thus maintains levels of free tRNAs and 50S ribosomes.</text>
</comment>
<comment type="catalytic activity">
    <reaction evidence="1">
        <text>an N-acyl-L-alpha-aminoacyl-tRNA + H2O = an N-acyl-L-amino acid + a tRNA + H(+)</text>
        <dbReference type="Rhea" id="RHEA:54448"/>
        <dbReference type="Rhea" id="RHEA-COMP:10123"/>
        <dbReference type="Rhea" id="RHEA-COMP:13883"/>
        <dbReference type="ChEBI" id="CHEBI:15377"/>
        <dbReference type="ChEBI" id="CHEBI:15378"/>
        <dbReference type="ChEBI" id="CHEBI:59874"/>
        <dbReference type="ChEBI" id="CHEBI:78442"/>
        <dbReference type="ChEBI" id="CHEBI:138191"/>
        <dbReference type="EC" id="3.1.1.29"/>
    </reaction>
</comment>
<comment type="subunit">
    <text evidence="1">Monomer.</text>
</comment>
<comment type="subcellular location">
    <subcellularLocation>
        <location evidence="1">Cytoplasm</location>
    </subcellularLocation>
</comment>
<comment type="similarity">
    <text evidence="1">Belongs to the PTH family.</text>
</comment>
<sequence length="193" mass="20911">MSNISLIVGLGNPGSEYAQTRHNAGFWFVEQLADKYGITIKNDPKFHGISGRGNIEGHDVRLLLPMTYMNRSGQSVVPFSKFYQIAPEAILIAHDELDMNPGVIRLKTGGGHGGHNGLRDIVPHIGPNFHRLRIGIGHPGSKERVSGHVLGKAPSSEQSLMDGAIDHALSKVKLLVQGQVPQAMNQINAYKPA</sequence>
<dbReference type="EC" id="3.1.1.29" evidence="1"/>
<dbReference type="EMBL" id="CP001182">
    <property type="protein sequence ID" value="ACJ40674.1"/>
    <property type="molecule type" value="Genomic_DNA"/>
</dbReference>
<dbReference type="SMR" id="B7I7B5"/>
<dbReference type="KEGG" id="abn:AB57_0880"/>
<dbReference type="HOGENOM" id="CLU_062456_3_1_6"/>
<dbReference type="Proteomes" id="UP000007094">
    <property type="component" value="Chromosome"/>
</dbReference>
<dbReference type="GO" id="GO:0005737">
    <property type="term" value="C:cytoplasm"/>
    <property type="evidence" value="ECO:0007669"/>
    <property type="project" value="UniProtKB-SubCell"/>
</dbReference>
<dbReference type="GO" id="GO:0004045">
    <property type="term" value="F:peptidyl-tRNA hydrolase activity"/>
    <property type="evidence" value="ECO:0007669"/>
    <property type="project" value="UniProtKB-UniRule"/>
</dbReference>
<dbReference type="GO" id="GO:0000049">
    <property type="term" value="F:tRNA binding"/>
    <property type="evidence" value="ECO:0007669"/>
    <property type="project" value="UniProtKB-UniRule"/>
</dbReference>
<dbReference type="GO" id="GO:0006515">
    <property type="term" value="P:protein quality control for misfolded or incompletely synthesized proteins"/>
    <property type="evidence" value="ECO:0007669"/>
    <property type="project" value="UniProtKB-UniRule"/>
</dbReference>
<dbReference type="GO" id="GO:0072344">
    <property type="term" value="P:rescue of stalled ribosome"/>
    <property type="evidence" value="ECO:0007669"/>
    <property type="project" value="UniProtKB-UniRule"/>
</dbReference>
<dbReference type="CDD" id="cd00462">
    <property type="entry name" value="PTH"/>
    <property type="match status" value="1"/>
</dbReference>
<dbReference type="FunFam" id="3.40.50.1470:FF:000001">
    <property type="entry name" value="Peptidyl-tRNA hydrolase"/>
    <property type="match status" value="1"/>
</dbReference>
<dbReference type="Gene3D" id="3.40.50.1470">
    <property type="entry name" value="Peptidyl-tRNA hydrolase"/>
    <property type="match status" value="1"/>
</dbReference>
<dbReference type="HAMAP" id="MF_00083">
    <property type="entry name" value="Pept_tRNA_hydro_bact"/>
    <property type="match status" value="1"/>
</dbReference>
<dbReference type="InterPro" id="IPR001328">
    <property type="entry name" value="Pept_tRNA_hydro"/>
</dbReference>
<dbReference type="InterPro" id="IPR018171">
    <property type="entry name" value="Pept_tRNA_hydro_CS"/>
</dbReference>
<dbReference type="InterPro" id="IPR036416">
    <property type="entry name" value="Pept_tRNA_hydro_sf"/>
</dbReference>
<dbReference type="NCBIfam" id="TIGR00447">
    <property type="entry name" value="pth"/>
    <property type="match status" value="1"/>
</dbReference>
<dbReference type="PANTHER" id="PTHR17224">
    <property type="entry name" value="PEPTIDYL-TRNA HYDROLASE"/>
    <property type="match status" value="1"/>
</dbReference>
<dbReference type="PANTHER" id="PTHR17224:SF1">
    <property type="entry name" value="PEPTIDYL-TRNA HYDROLASE"/>
    <property type="match status" value="1"/>
</dbReference>
<dbReference type="Pfam" id="PF01195">
    <property type="entry name" value="Pept_tRNA_hydro"/>
    <property type="match status" value="1"/>
</dbReference>
<dbReference type="SUPFAM" id="SSF53178">
    <property type="entry name" value="Peptidyl-tRNA hydrolase-like"/>
    <property type="match status" value="1"/>
</dbReference>
<dbReference type="PROSITE" id="PS01195">
    <property type="entry name" value="PEPT_TRNA_HYDROL_1"/>
    <property type="match status" value="1"/>
</dbReference>
<dbReference type="PROSITE" id="PS01196">
    <property type="entry name" value="PEPT_TRNA_HYDROL_2"/>
    <property type="match status" value="1"/>
</dbReference>
<protein>
    <recommendedName>
        <fullName evidence="1">Peptidyl-tRNA hydrolase</fullName>
        <shortName evidence="1">Pth</shortName>
        <ecNumber evidence="1">3.1.1.29</ecNumber>
    </recommendedName>
</protein>
<proteinExistence type="inferred from homology"/>
<organism>
    <name type="scientific">Acinetobacter baumannii (strain AB0057)</name>
    <dbReference type="NCBI Taxonomy" id="480119"/>
    <lineage>
        <taxon>Bacteria</taxon>
        <taxon>Pseudomonadati</taxon>
        <taxon>Pseudomonadota</taxon>
        <taxon>Gammaproteobacteria</taxon>
        <taxon>Moraxellales</taxon>
        <taxon>Moraxellaceae</taxon>
        <taxon>Acinetobacter</taxon>
        <taxon>Acinetobacter calcoaceticus/baumannii complex</taxon>
    </lineage>
</organism>
<accession>B7I7B5</accession>